<name>RPIA_VANPO</name>
<protein>
    <recommendedName>
        <fullName>Ribose-5-phosphate isomerase</fullName>
        <ecNumber>5.3.1.6</ecNumber>
    </recommendedName>
    <alternativeName>
        <fullName>D-ribose-5-phosphate ketol-isomerase</fullName>
    </alternativeName>
    <alternativeName>
        <fullName>Phosphoriboisomerase</fullName>
    </alternativeName>
</protein>
<feature type="chain" id="PRO_0000339894" description="Ribose-5-phosphate isomerase">
    <location>
        <begin position="1"/>
        <end position="259"/>
    </location>
</feature>
<proteinExistence type="inferred from homology"/>
<reference key="1">
    <citation type="journal article" date="2007" name="Proc. Natl. Acad. Sci. U.S.A.">
        <title>Independent sorting-out of thousands of duplicated gene pairs in two yeast species descended from a whole-genome duplication.</title>
        <authorList>
            <person name="Scannell D.R."/>
            <person name="Frank A.C."/>
            <person name="Conant G.C."/>
            <person name="Byrne K.P."/>
            <person name="Woolfit M."/>
            <person name="Wolfe K.H."/>
        </authorList>
    </citation>
    <scope>NUCLEOTIDE SEQUENCE [LARGE SCALE GENOMIC DNA]</scope>
    <source>
        <strain>ATCC 22028 / DSM 70294 / BCRC 21397 / CBS 2163 / NBRC 10782 / NRRL Y-8283 / UCD 57-17</strain>
    </source>
</reference>
<comment type="catalytic activity">
    <reaction>
        <text>aldehydo-D-ribose 5-phosphate = D-ribulose 5-phosphate</text>
        <dbReference type="Rhea" id="RHEA:14657"/>
        <dbReference type="ChEBI" id="CHEBI:58121"/>
        <dbReference type="ChEBI" id="CHEBI:58273"/>
        <dbReference type="EC" id="5.3.1.6"/>
    </reaction>
</comment>
<comment type="pathway">
    <text>Carbohydrate degradation; pentose phosphate pathway; D-ribose 5-phosphate from D-ribulose 5-phosphate (non-oxidative stage): step 1/1.</text>
</comment>
<comment type="subcellular location">
    <subcellularLocation>
        <location evidence="1">Cytoplasm</location>
    </subcellularLocation>
</comment>
<comment type="similarity">
    <text evidence="1">Belongs to the ribose 5-phosphate isomerase family.</text>
</comment>
<evidence type="ECO:0000305" key="1"/>
<sequence>MSSVPDIKTLPKLSNPLEDAKRLAAYRAVDENVDFQNERVIGIGSGSTVVYVAERLGQYLKDPKYTKYVSQFVCIPTGFQSRALILDNGLQLDSIDHHPIIDIAFDGADEVDVNLQLIKGGGACLFQEKLVSTSAKRFIVVADHRKQSPQYLGKNWRQGVPIEVVPSAYVRVQHDLLNKLHAQTAVVRQGGSAKAGPVVTDNNNFIIDADFGEIKDPKSLYVSIEMLIGVVEVGLFIDNAEKVYFGNADGSVNVLDKKN</sequence>
<keyword id="KW-0963">Cytoplasm</keyword>
<keyword id="KW-0413">Isomerase</keyword>
<keyword id="KW-1185">Reference proteome</keyword>
<gene>
    <name type="primary">RKI1</name>
    <name type="ORF">Kpol_1020p47</name>
</gene>
<organism>
    <name type="scientific">Vanderwaltozyma polyspora (strain ATCC 22028 / DSM 70294 / BCRC 21397 / CBS 2163 / NBRC 10782 / NRRL Y-8283 / UCD 57-17)</name>
    <name type="common">Kluyveromyces polysporus</name>
    <dbReference type="NCBI Taxonomy" id="436907"/>
    <lineage>
        <taxon>Eukaryota</taxon>
        <taxon>Fungi</taxon>
        <taxon>Dikarya</taxon>
        <taxon>Ascomycota</taxon>
        <taxon>Saccharomycotina</taxon>
        <taxon>Saccharomycetes</taxon>
        <taxon>Saccharomycetales</taxon>
        <taxon>Saccharomycetaceae</taxon>
        <taxon>Vanderwaltozyma</taxon>
    </lineage>
</organism>
<dbReference type="EC" id="5.3.1.6"/>
<dbReference type="EMBL" id="DS480414">
    <property type="protein sequence ID" value="EDO16938.1"/>
    <property type="molecule type" value="Genomic_DNA"/>
</dbReference>
<dbReference type="RefSeq" id="XP_001644796.1">
    <property type="nucleotide sequence ID" value="XM_001644746.1"/>
</dbReference>
<dbReference type="SMR" id="A7TLF7"/>
<dbReference type="FunCoup" id="A7TLF7">
    <property type="interactions" value="951"/>
</dbReference>
<dbReference type="STRING" id="436907.A7TLF7"/>
<dbReference type="GeneID" id="5545125"/>
<dbReference type="KEGG" id="vpo:Kpol_1020p47"/>
<dbReference type="eggNOG" id="KOG3075">
    <property type="taxonomic scope" value="Eukaryota"/>
</dbReference>
<dbReference type="HOGENOM" id="CLU_056590_0_0_1"/>
<dbReference type="InParanoid" id="A7TLF7"/>
<dbReference type="OMA" id="ACHVQEK"/>
<dbReference type="OrthoDB" id="1555531at2759"/>
<dbReference type="PhylomeDB" id="A7TLF7"/>
<dbReference type="UniPathway" id="UPA00115">
    <property type="reaction ID" value="UER00412"/>
</dbReference>
<dbReference type="Proteomes" id="UP000000267">
    <property type="component" value="Unassembled WGS sequence"/>
</dbReference>
<dbReference type="GO" id="GO:0005737">
    <property type="term" value="C:cytoplasm"/>
    <property type="evidence" value="ECO:0007669"/>
    <property type="project" value="UniProtKB-SubCell"/>
</dbReference>
<dbReference type="GO" id="GO:0004751">
    <property type="term" value="F:ribose-5-phosphate isomerase activity"/>
    <property type="evidence" value="ECO:0007669"/>
    <property type="project" value="UniProtKB-EC"/>
</dbReference>
<dbReference type="GO" id="GO:0006014">
    <property type="term" value="P:D-ribose metabolic process"/>
    <property type="evidence" value="ECO:0007669"/>
    <property type="project" value="TreeGrafter"/>
</dbReference>
<dbReference type="GO" id="GO:0009052">
    <property type="term" value="P:pentose-phosphate shunt, non-oxidative branch"/>
    <property type="evidence" value="ECO:0007669"/>
    <property type="project" value="InterPro"/>
</dbReference>
<dbReference type="CDD" id="cd01398">
    <property type="entry name" value="RPI_A"/>
    <property type="match status" value="1"/>
</dbReference>
<dbReference type="FunFam" id="3.40.50.1360:FF:000014">
    <property type="entry name" value="Ribose 5-phosphate isomerase"/>
    <property type="match status" value="1"/>
</dbReference>
<dbReference type="FunFam" id="3.30.70.260:FF:000053">
    <property type="entry name" value="Ribose-5-phosphate isomerase, putative"/>
    <property type="match status" value="1"/>
</dbReference>
<dbReference type="Gene3D" id="3.30.70.260">
    <property type="match status" value="1"/>
</dbReference>
<dbReference type="Gene3D" id="3.40.50.1360">
    <property type="match status" value="1"/>
</dbReference>
<dbReference type="InterPro" id="IPR037171">
    <property type="entry name" value="NagB/RpiA_transferase-like"/>
</dbReference>
<dbReference type="InterPro" id="IPR004788">
    <property type="entry name" value="Ribose5P_isomerase_type_A"/>
</dbReference>
<dbReference type="NCBIfam" id="NF001924">
    <property type="entry name" value="PRK00702.1"/>
    <property type="match status" value="1"/>
</dbReference>
<dbReference type="NCBIfam" id="TIGR00021">
    <property type="entry name" value="rpiA"/>
    <property type="match status" value="1"/>
</dbReference>
<dbReference type="PANTHER" id="PTHR11934">
    <property type="entry name" value="RIBOSE-5-PHOSPHATE ISOMERASE"/>
    <property type="match status" value="1"/>
</dbReference>
<dbReference type="PANTHER" id="PTHR11934:SF0">
    <property type="entry name" value="RIBOSE-5-PHOSPHATE ISOMERASE"/>
    <property type="match status" value="1"/>
</dbReference>
<dbReference type="Pfam" id="PF06026">
    <property type="entry name" value="Rib_5-P_isom_A"/>
    <property type="match status" value="1"/>
</dbReference>
<dbReference type="SUPFAM" id="SSF75445">
    <property type="entry name" value="D-ribose-5-phosphate isomerase (RpiA), lid domain"/>
    <property type="match status" value="1"/>
</dbReference>
<dbReference type="SUPFAM" id="SSF100950">
    <property type="entry name" value="NagB/RpiA/CoA transferase-like"/>
    <property type="match status" value="1"/>
</dbReference>
<accession>A7TLF7</accession>